<reference key="1">
    <citation type="journal article" date="2006" name="BMC Genomics">
        <title>Complete genome sequence of Shigella flexneri 5b and comparison with Shigella flexneri 2a.</title>
        <authorList>
            <person name="Nie H."/>
            <person name="Yang F."/>
            <person name="Zhang X."/>
            <person name="Yang J."/>
            <person name="Chen L."/>
            <person name="Wang J."/>
            <person name="Xiong Z."/>
            <person name="Peng J."/>
            <person name="Sun L."/>
            <person name="Dong J."/>
            <person name="Xue Y."/>
            <person name="Xu X."/>
            <person name="Chen S."/>
            <person name="Yao Z."/>
            <person name="Shen Y."/>
            <person name="Jin Q."/>
        </authorList>
    </citation>
    <scope>NUCLEOTIDE SEQUENCE [LARGE SCALE GENOMIC DNA]</scope>
    <source>
        <strain>8401</strain>
    </source>
</reference>
<name>GLK_SHIF8</name>
<proteinExistence type="inferred from homology"/>
<protein>
    <recommendedName>
        <fullName evidence="1">Glucokinase</fullName>
        <ecNumber evidence="1">2.7.1.2</ecNumber>
    </recommendedName>
    <alternativeName>
        <fullName evidence="1">Glucose kinase</fullName>
    </alternativeName>
</protein>
<dbReference type="EC" id="2.7.1.2" evidence="1"/>
<dbReference type="EMBL" id="CP000266">
    <property type="protein sequence ID" value="ABF04554.1"/>
    <property type="molecule type" value="Genomic_DNA"/>
</dbReference>
<dbReference type="RefSeq" id="WP_000170347.1">
    <property type="nucleotide sequence ID" value="NC_008258.1"/>
</dbReference>
<dbReference type="SMR" id="Q0T2B1"/>
<dbReference type="KEGG" id="sfv:SFV_2446"/>
<dbReference type="HOGENOM" id="CLU_042582_1_0_6"/>
<dbReference type="Proteomes" id="UP000000659">
    <property type="component" value="Chromosome"/>
</dbReference>
<dbReference type="GO" id="GO:0005829">
    <property type="term" value="C:cytosol"/>
    <property type="evidence" value="ECO:0007669"/>
    <property type="project" value="TreeGrafter"/>
</dbReference>
<dbReference type="GO" id="GO:0005524">
    <property type="term" value="F:ATP binding"/>
    <property type="evidence" value="ECO:0007669"/>
    <property type="project" value="UniProtKB-UniRule"/>
</dbReference>
<dbReference type="GO" id="GO:0005536">
    <property type="term" value="F:D-glucose binding"/>
    <property type="evidence" value="ECO:0007669"/>
    <property type="project" value="InterPro"/>
</dbReference>
<dbReference type="GO" id="GO:0004340">
    <property type="term" value="F:glucokinase activity"/>
    <property type="evidence" value="ECO:0007669"/>
    <property type="project" value="UniProtKB-UniRule"/>
</dbReference>
<dbReference type="GO" id="GO:0006096">
    <property type="term" value="P:glycolytic process"/>
    <property type="evidence" value="ECO:0007669"/>
    <property type="project" value="UniProtKB-UniRule"/>
</dbReference>
<dbReference type="CDD" id="cd24008">
    <property type="entry name" value="ASKHA_NBD_GLK"/>
    <property type="match status" value="1"/>
</dbReference>
<dbReference type="FunFam" id="3.30.420.40:FF:000045">
    <property type="entry name" value="Glucokinase"/>
    <property type="match status" value="1"/>
</dbReference>
<dbReference type="FunFam" id="3.40.367.20:FF:000002">
    <property type="entry name" value="Glucokinase"/>
    <property type="match status" value="1"/>
</dbReference>
<dbReference type="Gene3D" id="3.30.420.40">
    <property type="match status" value="1"/>
</dbReference>
<dbReference type="Gene3D" id="3.40.367.20">
    <property type="match status" value="1"/>
</dbReference>
<dbReference type="HAMAP" id="MF_00524">
    <property type="entry name" value="Glucokinase"/>
    <property type="match status" value="1"/>
</dbReference>
<dbReference type="InterPro" id="IPR043129">
    <property type="entry name" value="ATPase_NBD"/>
</dbReference>
<dbReference type="InterPro" id="IPR050201">
    <property type="entry name" value="Bacterial_glucokinase"/>
</dbReference>
<dbReference type="InterPro" id="IPR003836">
    <property type="entry name" value="Glucokinase"/>
</dbReference>
<dbReference type="NCBIfam" id="TIGR00749">
    <property type="entry name" value="glk"/>
    <property type="match status" value="1"/>
</dbReference>
<dbReference type="NCBIfam" id="NF001414">
    <property type="entry name" value="PRK00292.1-1"/>
    <property type="match status" value="1"/>
</dbReference>
<dbReference type="NCBIfam" id="NF001416">
    <property type="entry name" value="PRK00292.1-3"/>
    <property type="match status" value="1"/>
</dbReference>
<dbReference type="PANTHER" id="PTHR47690">
    <property type="entry name" value="GLUCOKINASE"/>
    <property type="match status" value="1"/>
</dbReference>
<dbReference type="PANTHER" id="PTHR47690:SF1">
    <property type="entry name" value="GLUCOKINASE"/>
    <property type="match status" value="1"/>
</dbReference>
<dbReference type="Pfam" id="PF02685">
    <property type="entry name" value="Glucokinase"/>
    <property type="match status" value="1"/>
</dbReference>
<dbReference type="SUPFAM" id="SSF53067">
    <property type="entry name" value="Actin-like ATPase domain"/>
    <property type="match status" value="1"/>
</dbReference>
<feature type="chain" id="PRO_1000050976" description="Glucokinase">
    <location>
        <begin position="1"/>
        <end position="321"/>
    </location>
</feature>
<feature type="binding site" evidence="1">
    <location>
        <begin position="8"/>
        <end position="13"/>
    </location>
    <ligand>
        <name>ATP</name>
        <dbReference type="ChEBI" id="CHEBI:30616"/>
    </ligand>
</feature>
<comment type="catalytic activity">
    <reaction evidence="1">
        <text>D-glucose + ATP = D-glucose 6-phosphate + ADP + H(+)</text>
        <dbReference type="Rhea" id="RHEA:17825"/>
        <dbReference type="ChEBI" id="CHEBI:4167"/>
        <dbReference type="ChEBI" id="CHEBI:15378"/>
        <dbReference type="ChEBI" id="CHEBI:30616"/>
        <dbReference type="ChEBI" id="CHEBI:61548"/>
        <dbReference type="ChEBI" id="CHEBI:456216"/>
        <dbReference type="EC" id="2.7.1.2"/>
    </reaction>
</comment>
<comment type="subcellular location">
    <subcellularLocation>
        <location evidence="1">Cytoplasm</location>
    </subcellularLocation>
</comment>
<comment type="similarity">
    <text evidence="1">Belongs to the bacterial glucokinase family.</text>
</comment>
<organism>
    <name type="scientific">Shigella flexneri serotype 5b (strain 8401)</name>
    <dbReference type="NCBI Taxonomy" id="373384"/>
    <lineage>
        <taxon>Bacteria</taxon>
        <taxon>Pseudomonadati</taxon>
        <taxon>Pseudomonadota</taxon>
        <taxon>Gammaproteobacteria</taxon>
        <taxon>Enterobacterales</taxon>
        <taxon>Enterobacteriaceae</taxon>
        <taxon>Shigella</taxon>
    </lineage>
</organism>
<accession>Q0T2B1</accession>
<sequence length="321" mass="34772">MTKYALVGDVGGTNARLALCDIASGEISQAKTYSGLDYPSLEAVIRVYLEEHKVEVKDGCIAIACPITGDWVAMTNHTWAFSIAEMKKNLGFSHLEIINDFTAVSMAIPMLKKEHLIQFGGAEPVEGKPIAVYGAGTGLGVAHLVHVDKRWVSLPGEGGHVDFAPNSEEEAIILEILRAEIGHVSAERVLSGPGLVNLYRAIVKADNRLPENLKPKDITERALADSCTDCRRALSLFCVIMGRFGGNLALNLGTFGGVFIAGGIVPRFLEFFKASGFRAAFEDKGRFKEYVHDIPVYLIVHDYPGLLGSGAHLRQTLGHIL</sequence>
<keyword id="KW-0067">ATP-binding</keyword>
<keyword id="KW-0963">Cytoplasm</keyword>
<keyword id="KW-0324">Glycolysis</keyword>
<keyword id="KW-0418">Kinase</keyword>
<keyword id="KW-0547">Nucleotide-binding</keyword>
<keyword id="KW-0808">Transferase</keyword>
<evidence type="ECO:0000255" key="1">
    <source>
        <dbReference type="HAMAP-Rule" id="MF_00524"/>
    </source>
</evidence>
<gene>
    <name evidence="1" type="primary">glk</name>
    <name type="ordered locus">SFV_2446</name>
</gene>